<name>LEPA_STRP8</name>
<feature type="chain" id="PRO_0000176383" description="Putative elongation factor 4">
    <location>
        <begin position="1"/>
        <end position="174"/>
    </location>
</feature>
<reference key="1">
    <citation type="journal article" date="2002" name="Proc. Natl. Acad. Sci. U.S.A.">
        <title>Genome sequence and comparative microarray analysis of serotype M18 group A Streptococcus strains associated with acute rheumatic fever outbreaks.</title>
        <authorList>
            <person name="Smoot J.C."/>
            <person name="Barbian K.D."/>
            <person name="Van Gompel J.J."/>
            <person name="Smoot L.M."/>
            <person name="Chaussee M.S."/>
            <person name="Sylva G.L."/>
            <person name="Sturdevant D.E."/>
            <person name="Ricklefs S.M."/>
            <person name="Porcella S.F."/>
            <person name="Parkins L.D."/>
            <person name="Beres S.B."/>
            <person name="Campbell D.S."/>
            <person name="Smith T.M."/>
            <person name="Zhang Q."/>
            <person name="Kapur V."/>
            <person name="Daly J.A."/>
            <person name="Veasy L.G."/>
            <person name="Musser J.M."/>
        </authorList>
    </citation>
    <scope>NUCLEOTIDE SEQUENCE [LARGE SCALE GENOMIC DNA]</scope>
    <source>
        <strain>MGAS8232</strain>
    </source>
</reference>
<comment type="function">
    <text evidence="1">Required for accurate and efficient protein synthesis under certain stress conditions. May act as a fidelity factor of the translation reaction, by catalyzing a one-codon backward translocation of tRNAs on improperly translocated ribosomes. Back-translocation proceeds from a post-translocation (POST) complex to a pre-translocation (PRE) complex, thus giving elongation factor G a second chance to translocate the tRNAs correctly. Binds to ribosomes in a GTP-dependent manner (By similarity).</text>
</comment>
<comment type="catalytic activity">
    <reaction>
        <text>GTP + H2O = GDP + phosphate + H(+)</text>
        <dbReference type="Rhea" id="RHEA:19669"/>
        <dbReference type="ChEBI" id="CHEBI:15377"/>
        <dbReference type="ChEBI" id="CHEBI:15378"/>
        <dbReference type="ChEBI" id="CHEBI:37565"/>
        <dbReference type="ChEBI" id="CHEBI:43474"/>
        <dbReference type="ChEBI" id="CHEBI:58189"/>
        <dbReference type="EC" id="3.6.5.n1"/>
    </reaction>
</comment>
<comment type="subcellular location">
    <subcellularLocation>
        <location evidence="1">Cell membrane</location>
        <topology evidence="1">Peripheral membrane protein</topology>
        <orientation evidence="1">Cytoplasmic side</orientation>
    </subcellularLocation>
</comment>
<comment type="similarity">
    <text evidence="2">Belongs to the GTP-binding elongation factor family. LepA subfamily.</text>
</comment>
<comment type="caution">
    <text evidence="2">Could be the product of a pseudogene. The N-terminal region is truncated when compared to orthologs.</text>
</comment>
<sequence length="174" mass="20010">MKQTLDYIDDNRVNVIYQIPLAEIVFDFFDKLKSSTRGYASFDYDMSEYRRSQLVKMDILLNGDKVDALSFIVHKEFAYERGKIIVEKLKKIIPRQQFEVPIQAAIGQKIVARSDIKALRKNVLAKCYGGDVSRKRKLLEKQKAGKKRMKAIGSVEVPQEAFLSVLSMDEDAKK</sequence>
<proteinExistence type="uncertain"/>
<dbReference type="EC" id="3.6.5.n1"/>
<dbReference type="EMBL" id="AE009949">
    <property type="protein sequence ID" value="AAL97661.1"/>
    <property type="molecule type" value="Genomic_DNA"/>
</dbReference>
<dbReference type="SMR" id="Q8P173"/>
<dbReference type="KEGG" id="spm:spyM18_1028"/>
<dbReference type="HOGENOM" id="CLU_009995_1_1_9"/>
<dbReference type="GO" id="GO:0005886">
    <property type="term" value="C:plasma membrane"/>
    <property type="evidence" value="ECO:0007669"/>
    <property type="project" value="UniProtKB-SubCell"/>
</dbReference>
<dbReference type="GO" id="GO:0005525">
    <property type="term" value="F:GTP binding"/>
    <property type="evidence" value="ECO:0007669"/>
    <property type="project" value="UniProtKB-KW"/>
</dbReference>
<dbReference type="GO" id="GO:0003924">
    <property type="term" value="F:GTPase activity"/>
    <property type="evidence" value="ECO:0007669"/>
    <property type="project" value="RHEA"/>
</dbReference>
<dbReference type="GO" id="GO:0043022">
    <property type="term" value="F:ribosome binding"/>
    <property type="evidence" value="ECO:0007669"/>
    <property type="project" value="TreeGrafter"/>
</dbReference>
<dbReference type="GO" id="GO:0045727">
    <property type="term" value="P:positive regulation of translation"/>
    <property type="evidence" value="ECO:0007669"/>
    <property type="project" value="TreeGrafter"/>
</dbReference>
<dbReference type="GO" id="GO:0006412">
    <property type="term" value="P:translation"/>
    <property type="evidence" value="ECO:0007669"/>
    <property type="project" value="UniProtKB-KW"/>
</dbReference>
<dbReference type="FunFam" id="3.30.70.2570:FF:000001">
    <property type="entry name" value="Translation factor GUF1, mitochondrial"/>
    <property type="match status" value="1"/>
</dbReference>
<dbReference type="Gene3D" id="3.30.70.240">
    <property type="match status" value="1"/>
</dbReference>
<dbReference type="Gene3D" id="3.30.70.2570">
    <property type="entry name" value="Elongation factor 4, C-terminal domain"/>
    <property type="match status" value="1"/>
</dbReference>
<dbReference type="InterPro" id="IPR006297">
    <property type="entry name" value="EF-4"/>
</dbReference>
<dbReference type="InterPro" id="IPR035647">
    <property type="entry name" value="EFG_III/V"/>
</dbReference>
<dbReference type="InterPro" id="IPR000640">
    <property type="entry name" value="EFG_V-like"/>
</dbReference>
<dbReference type="InterPro" id="IPR038363">
    <property type="entry name" value="LepA_C_sf"/>
</dbReference>
<dbReference type="InterPro" id="IPR013842">
    <property type="entry name" value="LepA_CTD"/>
</dbReference>
<dbReference type="PANTHER" id="PTHR43512:SF4">
    <property type="entry name" value="TRANSLATION FACTOR GUF1 HOMOLOG, CHLOROPLASTIC"/>
    <property type="match status" value="1"/>
</dbReference>
<dbReference type="PANTHER" id="PTHR43512">
    <property type="entry name" value="TRANSLATION FACTOR GUF1-RELATED"/>
    <property type="match status" value="1"/>
</dbReference>
<dbReference type="Pfam" id="PF00679">
    <property type="entry name" value="EFG_C"/>
    <property type="match status" value="1"/>
</dbReference>
<dbReference type="Pfam" id="PF06421">
    <property type="entry name" value="LepA_C"/>
    <property type="match status" value="1"/>
</dbReference>
<dbReference type="SUPFAM" id="SSF54980">
    <property type="entry name" value="EF-G C-terminal domain-like"/>
    <property type="match status" value="1"/>
</dbReference>
<protein>
    <recommendedName>
        <fullName>Putative elongation factor 4</fullName>
        <shortName>EF-4</shortName>
        <ecNumber>3.6.5.n1</ecNumber>
    </recommendedName>
    <alternativeName>
        <fullName>Ribosomal back-translocase LepA homolog</fullName>
    </alternativeName>
</protein>
<accession>Q8P173</accession>
<organism>
    <name type="scientific">Streptococcus pyogenes serotype M18 (strain MGAS8232)</name>
    <dbReference type="NCBI Taxonomy" id="186103"/>
    <lineage>
        <taxon>Bacteria</taxon>
        <taxon>Bacillati</taxon>
        <taxon>Bacillota</taxon>
        <taxon>Bacilli</taxon>
        <taxon>Lactobacillales</taxon>
        <taxon>Streptococcaceae</taxon>
        <taxon>Streptococcus</taxon>
    </lineage>
</organism>
<keyword id="KW-1003">Cell membrane</keyword>
<keyword id="KW-0342">GTP-binding</keyword>
<keyword id="KW-0378">Hydrolase</keyword>
<keyword id="KW-0472">Membrane</keyword>
<keyword id="KW-0547">Nucleotide-binding</keyword>
<keyword id="KW-0648">Protein biosynthesis</keyword>
<gene>
    <name type="primary">lepA</name>
    <name type="ordered locus">spyM18_1028</name>
</gene>
<evidence type="ECO:0000250" key="1"/>
<evidence type="ECO:0000305" key="2"/>